<sequence>MDLMSFKEREISKKDCVELFEDTENFFDILKLADSIRKDIVGDTVTFVKNTNIETTNVCTMGCKFCAFSVSKNSPEAFKLDADEIAKKAVIAKKSGLTEVTIHGGIHPDVDTHFQVETINKVNSATSKLGGIYTHAYSPQEILNGAENAGLSIKEALKMLNEAGLRTIPGTAAEILDDEVRSDICPLKMSTKKWIDIMKTAHKTGIKTTSTIIYGHVEEYKHIVDHLSILKELQEETGGITEFIPMSFLHENTPLYKSGRVTDGASGLYELKLYAIARILFKESIKNIQAPRVKIGTKLSQLILKSGANDLGGTLVEDKVSKAAGSIYEDASVDLMKNAITSIGRIPKERTTLYEIIE</sequence>
<proteinExistence type="inferred from homology"/>
<organism>
    <name type="scientific">Methanococcus maripaludis (strain DSM 14266 / JCM 13030 / NBRC 101832 / S2 / LL)</name>
    <dbReference type="NCBI Taxonomy" id="267377"/>
    <lineage>
        <taxon>Archaea</taxon>
        <taxon>Methanobacteriati</taxon>
        <taxon>Methanobacteriota</taxon>
        <taxon>Methanomada group</taxon>
        <taxon>Methanococci</taxon>
        <taxon>Methanococcales</taxon>
        <taxon>Methanococcaceae</taxon>
        <taxon>Methanococcus</taxon>
    </lineage>
</organism>
<comment type="function">
    <text evidence="1">Catalyzes the radical-mediated synthesis of 5-amino-5-(4-hydroxybenzyl)-6-(D-ribitylimino)-5,6-dihydrouracil from 5-amino-6-(D-ribitylamino)uracil and L-tyrosine.</text>
</comment>
<comment type="catalytic activity">
    <reaction evidence="1">
        <text>5-amino-6-(D-ribitylamino)uracil + L-tyrosine + S-adenosyl-L-methionine = 5-amino-5-(4-hydroxybenzyl)-6-(D-ribitylimino)-5,6-dihydrouracil + 2-iminoacetate + 5'-deoxyadenosine + L-methionine + H(+)</text>
        <dbReference type="Rhea" id="RHEA:55200"/>
        <dbReference type="ChEBI" id="CHEBI:15378"/>
        <dbReference type="ChEBI" id="CHEBI:15934"/>
        <dbReference type="ChEBI" id="CHEBI:17319"/>
        <dbReference type="ChEBI" id="CHEBI:57844"/>
        <dbReference type="ChEBI" id="CHEBI:58315"/>
        <dbReference type="ChEBI" id="CHEBI:59789"/>
        <dbReference type="ChEBI" id="CHEBI:77846"/>
        <dbReference type="ChEBI" id="CHEBI:85936"/>
        <dbReference type="EC" id="2.5.1.147"/>
    </reaction>
</comment>
<comment type="cofactor">
    <cofactor evidence="1">
        <name>[4Fe-4S] cluster</name>
        <dbReference type="ChEBI" id="CHEBI:49883"/>
    </cofactor>
    <text evidence="1">Binds 1 [4Fe-4S] cluster. The cluster is coordinated with 3 cysteines and an exchangeable S-adenosyl-L-methionine.</text>
</comment>
<comment type="pathway">
    <text evidence="1">Cofactor biosynthesis; coenzyme F0 biosynthesis.</text>
</comment>
<comment type="subunit">
    <text evidence="1">Consists of two subunits, CofG and CofH.</text>
</comment>
<comment type="similarity">
    <text evidence="1">Belongs to the radical SAM superfamily. CofH family.</text>
</comment>
<name>COFH2_METMP</name>
<feature type="chain" id="PRO_0000141723" description="5-amino-6-(D-ribitylamino)uracil--L-tyrosine 4-hydroxyphenyl transferase 2">
    <location>
        <begin position="1"/>
        <end position="358"/>
    </location>
</feature>
<feature type="domain" description="Radical SAM core" evidence="2">
    <location>
        <begin position="45"/>
        <end position="292"/>
    </location>
</feature>
<feature type="binding site" evidence="1">
    <location>
        <position position="59"/>
    </location>
    <ligand>
        <name>[4Fe-4S] cluster</name>
        <dbReference type="ChEBI" id="CHEBI:49883"/>
        <note>4Fe-4S-S-AdoMet</note>
    </ligand>
</feature>
<feature type="binding site" evidence="1">
    <location>
        <position position="63"/>
    </location>
    <ligand>
        <name>[4Fe-4S] cluster</name>
        <dbReference type="ChEBI" id="CHEBI:49883"/>
        <note>4Fe-4S-S-AdoMet</note>
    </ligand>
</feature>
<feature type="binding site" evidence="1">
    <location>
        <position position="66"/>
    </location>
    <ligand>
        <name>[4Fe-4S] cluster</name>
        <dbReference type="ChEBI" id="CHEBI:49883"/>
        <note>4Fe-4S-S-AdoMet</note>
    </ligand>
</feature>
<keyword id="KW-0004">4Fe-4S</keyword>
<keyword id="KW-0408">Iron</keyword>
<keyword id="KW-0411">Iron-sulfur</keyword>
<keyword id="KW-0479">Metal-binding</keyword>
<keyword id="KW-1185">Reference proteome</keyword>
<keyword id="KW-0949">S-adenosyl-L-methionine</keyword>
<keyword id="KW-0808">Transferase</keyword>
<gene>
    <name evidence="1" type="primary">cofH2</name>
    <name type="ordered locus">MMP0057</name>
</gene>
<protein>
    <recommendedName>
        <fullName evidence="1">5-amino-6-(D-ribitylamino)uracil--L-tyrosine 4-hydroxyphenyl transferase 2</fullName>
        <ecNumber evidence="1">2.5.1.147</ecNumber>
    </recommendedName>
    <alternativeName>
        <fullName evidence="1">FO synthase subunit 2 2</fullName>
    </alternativeName>
</protein>
<accession>Q6M160</accession>
<reference key="1">
    <citation type="journal article" date="2004" name="J. Bacteriol.">
        <title>Complete genome sequence of the genetically tractable hydrogenotrophic methanogen Methanococcus maripaludis.</title>
        <authorList>
            <person name="Hendrickson E.L."/>
            <person name="Kaul R."/>
            <person name="Zhou Y."/>
            <person name="Bovee D."/>
            <person name="Chapman P."/>
            <person name="Chung J."/>
            <person name="Conway de Macario E."/>
            <person name="Dodsworth J.A."/>
            <person name="Gillett W."/>
            <person name="Graham D.E."/>
            <person name="Hackett M."/>
            <person name="Haydock A.K."/>
            <person name="Kang A."/>
            <person name="Land M.L."/>
            <person name="Levy R."/>
            <person name="Lie T.J."/>
            <person name="Major T.A."/>
            <person name="Moore B.C."/>
            <person name="Porat I."/>
            <person name="Palmeiri A."/>
            <person name="Rouse G."/>
            <person name="Saenphimmachak C."/>
            <person name="Soell D."/>
            <person name="Van Dien S."/>
            <person name="Wang T."/>
            <person name="Whitman W.B."/>
            <person name="Xia Q."/>
            <person name="Zhang Y."/>
            <person name="Larimer F.W."/>
            <person name="Olson M.V."/>
            <person name="Leigh J.A."/>
        </authorList>
    </citation>
    <scope>NUCLEOTIDE SEQUENCE [LARGE SCALE GENOMIC DNA]</scope>
    <source>
        <strain>DSM 14266 / JCM 13030 / NBRC 101832 / S2 / LL</strain>
    </source>
</reference>
<evidence type="ECO:0000255" key="1">
    <source>
        <dbReference type="HAMAP-Rule" id="MF_01612"/>
    </source>
</evidence>
<evidence type="ECO:0000255" key="2">
    <source>
        <dbReference type="PROSITE-ProRule" id="PRU01266"/>
    </source>
</evidence>
<dbReference type="EC" id="2.5.1.147" evidence="1"/>
<dbReference type="EMBL" id="BX950229">
    <property type="protein sequence ID" value="CAF29613.1"/>
    <property type="molecule type" value="Genomic_DNA"/>
</dbReference>
<dbReference type="RefSeq" id="WP_011170001.1">
    <property type="nucleotide sequence ID" value="NC_005791.1"/>
</dbReference>
<dbReference type="SMR" id="Q6M160"/>
<dbReference type="STRING" id="267377.MMP0057"/>
<dbReference type="DNASU" id="2762565"/>
<dbReference type="EnsemblBacteria" id="CAF29613">
    <property type="protein sequence ID" value="CAF29613"/>
    <property type="gene ID" value="MMP0057"/>
</dbReference>
<dbReference type="GeneID" id="2762565"/>
<dbReference type="KEGG" id="mmp:MMP0057"/>
<dbReference type="PATRIC" id="fig|267377.15.peg.58"/>
<dbReference type="eggNOG" id="arCOG00656">
    <property type="taxonomic scope" value="Archaea"/>
</dbReference>
<dbReference type="HOGENOM" id="CLU_040406_1_0_2"/>
<dbReference type="OrthoDB" id="8186at2157"/>
<dbReference type="UniPathway" id="UPA00072"/>
<dbReference type="Proteomes" id="UP000000590">
    <property type="component" value="Chromosome"/>
</dbReference>
<dbReference type="GO" id="GO:0051539">
    <property type="term" value="F:4 iron, 4 sulfur cluster binding"/>
    <property type="evidence" value="ECO:0007669"/>
    <property type="project" value="UniProtKB-KW"/>
</dbReference>
<dbReference type="GO" id="GO:0141093">
    <property type="term" value="F:5-amino-6-(D-ribitylamino)uracil--L-tyrosine 4-hydroxyphenyl transferase activity"/>
    <property type="evidence" value="ECO:0007669"/>
    <property type="project" value="UniProtKB-EC"/>
</dbReference>
<dbReference type="GO" id="GO:0044689">
    <property type="term" value="F:7,8-didemethyl-8-hydroxy-5-deazariboflavin synthase activity"/>
    <property type="evidence" value="ECO:0007669"/>
    <property type="project" value="TreeGrafter"/>
</dbReference>
<dbReference type="GO" id="GO:0005506">
    <property type="term" value="F:iron ion binding"/>
    <property type="evidence" value="ECO:0007669"/>
    <property type="project" value="UniProtKB-UniRule"/>
</dbReference>
<dbReference type="CDD" id="cd01335">
    <property type="entry name" value="Radical_SAM"/>
    <property type="match status" value="1"/>
</dbReference>
<dbReference type="Gene3D" id="3.20.20.70">
    <property type="entry name" value="Aldolase class I"/>
    <property type="match status" value="1"/>
</dbReference>
<dbReference type="HAMAP" id="MF_01612">
    <property type="entry name" value="FO_synth_sub2"/>
    <property type="match status" value="1"/>
</dbReference>
<dbReference type="InterPro" id="IPR013785">
    <property type="entry name" value="Aldolase_TIM"/>
</dbReference>
<dbReference type="InterPro" id="IPR045567">
    <property type="entry name" value="CofH/MnqC-like_C"/>
</dbReference>
<dbReference type="InterPro" id="IPR019940">
    <property type="entry name" value="CofH_family"/>
</dbReference>
<dbReference type="InterPro" id="IPR006638">
    <property type="entry name" value="Elp3/MiaA/NifB-like_rSAM"/>
</dbReference>
<dbReference type="InterPro" id="IPR034405">
    <property type="entry name" value="F420"/>
</dbReference>
<dbReference type="InterPro" id="IPR020050">
    <property type="entry name" value="FO_synthase_su2"/>
</dbReference>
<dbReference type="InterPro" id="IPR007197">
    <property type="entry name" value="rSAM"/>
</dbReference>
<dbReference type="NCBIfam" id="TIGR00423">
    <property type="entry name" value="CofH family radical SAM protein"/>
    <property type="match status" value="1"/>
</dbReference>
<dbReference type="NCBIfam" id="TIGR03551">
    <property type="entry name" value="F420_cofH"/>
    <property type="match status" value="1"/>
</dbReference>
<dbReference type="NCBIfam" id="NF005609">
    <property type="entry name" value="PRK07360.1"/>
    <property type="match status" value="1"/>
</dbReference>
<dbReference type="PANTHER" id="PTHR43076">
    <property type="entry name" value="FO SYNTHASE (COFH)"/>
    <property type="match status" value="1"/>
</dbReference>
<dbReference type="PANTHER" id="PTHR43076:SF1">
    <property type="entry name" value="LIPOYL SYNTHASE 2"/>
    <property type="match status" value="1"/>
</dbReference>
<dbReference type="Pfam" id="PF19288">
    <property type="entry name" value="CofH_C"/>
    <property type="match status" value="1"/>
</dbReference>
<dbReference type="Pfam" id="PF04055">
    <property type="entry name" value="Radical_SAM"/>
    <property type="match status" value="1"/>
</dbReference>
<dbReference type="PIRSF" id="PIRSF004762">
    <property type="entry name" value="CHP00423"/>
    <property type="match status" value="1"/>
</dbReference>
<dbReference type="SFLD" id="SFLDF00293">
    <property type="entry name" value="((2_3_4_5-tetrahydroxypentyl)a"/>
    <property type="match status" value="1"/>
</dbReference>
<dbReference type="SFLD" id="SFLDG01388">
    <property type="entry name" value="7_8-didemethyl-8-hydroxy-5-dea"/>
    <property type="match status" value="1"/>
</dbReference>
<dbReference type="SFLD" id="SFLDG01389">
    <property type="entry name" value="menaquinone_synthsis_involved"/>
    <property type="match status" value="1"/>
</dbReference>
<dbReference type="SMART" id="SM00729">
    <property type="entry name" value="Elp3"/>
    <property type="match status" value="1"/>
</dbReference>
<dbReference type="SUPFAM" id="SSF102114">
    <property type="entry name" value="Radical SAM enzymes"/>
    <property type="match status" value="1"/>
</dbReference>
<dbReference type="PROSITE" id="PS51918">
    <property type="entry name" value="RADICAL_SAM"/>
    <property type="match status" value="1"/>
</dbReference>